<proteinExistence type="inferred from homology"/>
<sequence length="590" mass="65869">MRTEYCGQLRLSHVGQQVTLCGWVNRRRDLGSLIFIDMRDREGIVQVFFDPDRADALKLASELRNEFCIQVTGTVRARDEKNINRDMATGEIEVLASSLTIINRADVLPLDSNHVNTEEARLKYRYLDLRRPEMAQRLKTRAKITSLVRRFMDDHGFLDIETPMLTKATPEGARDYLVPSRVHKGKFYALPQSPQLFKQLLMMSGFDRYYQIVKCFRDEDLRADRQPEFTQIDVETSFMTAPQVREVMEALVRHLWLEVKGVDLGDFPVMTFAEAERRYGSDKPDLRNPMELTDVADLLKSVEFAVFAGPANDPKGRVAALRVPGGASLTRKQIDEYGNFVKIYGAKGLAYIKVNERAKGLEGINSPVAKFLNAEIIEAILERTGAQDGDMIFFGADNKKIVADAMGALRLKVGKDLGLTDESKWAPLWVIDFPMFEDDGEGGLTAMHHPFTSPKDMTAAELKAAPENAVANAYDMVINGYEVGGGSVRIHNGDMQQTVFGILGINEEEQREKFGFLLDALKYGTPPHAGLAFGLDRLTMLLTGTDNIRDVIAFPKTTAAACLMTEAPSFANPTALAELSIQVVKKAENN</sequence>
<name>SYD_ECOL6</name>
<evidence type="ECO:0000255" key="1">
    <source>
        <dbReference type="HAMAP-Rule" id="MF_00044"/>
    </source>
</evidence>
<keyword id="KW-0030">Aminoacyl-tRNA synthetase</keyword>
<keyword id="KW-0067">ATP-binding</keyword>
<keyword id="KW-0963">Cytoplasm</keyword>
<keyword id="KW-0436">Ligase</keyword>
<keyword id="KW-0547">Nucleotide-binding</keyword>
<keyword id="KW-0648">Protein biosynthesis</keyword>
<keyword id="KW-1185">Reference proteome</keyword>
<comment type="function">
    <text evidence="1">Catalyzes the attachment of L-aspartate to tRNA(Asp) in a two-step reaction: L-aspartate is first activated by ATP to form Asp-AMP and then transferred to the acceptor end of tRNA(Asp).</text>
</comment>
<comment type="catalytic activity">
    <reaction evidence="1">
        <text>tRNA(Asp) + L-aspartate + ATP = L-aspartyl-tRNA(Asp) + AMP + diphosphate</text>
        <dbReference type="Rhea" id="RHEA:19649"/>
        <dbReference type="Rhea" id="RHEA-COMP:9660"/>
        <dbReference type="Rhea" id="RHEA-COMP:9678"/>
        <dbReference type="ChEBI" id="CHEBI:29991"/>
        <dbReference type="ChEBI" id="CHEBI:30616"/>
        <dbReference type="ChEBI" id="CHEBI:33019"/>
        <dbReference type="ChEBI" id="CHEBI:78442"/>
        <dbReference type="ChEBI" id="CHEBI:78516"/>
        <dbReference type="ChEBI" id="CHEBI:456215"/>
        <dbReference type="EC" id="6.1.1.12"/>
    </reaction>
</comment>
<comment type="subunit">
    <text evidence="1">Homodimer.</text>
</comment>
<comment type="subcellular location">
    <subcellularLocation>
        <location evidence="1">Cytoplasm</location>
    </subcellularLocation>
</comment>
<comment type="similarity">
    <text evidence="1">Belongs to the class-II aminoacyl-tRNA synthetase family. Type 1 subfamily.</text>
</comment>
<gene>
    <name evidence="1" type="primary">aspS</name>
    <name type="ordered locus">c2280</name>
</gene>
<accession>Q8FGQ9</accession>
<reference key="1">
    <citation type="journal article" date="2002" name="Proc. Natl. Acad. Sci. U.S.A.">
        <title>Extensive mosaic structure revealed by the complete genome sequence of uropathogenic Escherichia coli.</title>
        <authorList>
            <person name="Welch R.A."/>
            <person name="Burland V."/>
            <person name="Plunkett G. III"/>
            <person name="Redford P."/>
            <person name="Roesch P."/>
            <person name="Rasko D."/>
            <person name="Buckles E.L."/>
            <person name="Liou S.-R."/>
            <person name="Boutin A."/>
            <person name="Hackett J."/>
            <person name="Stroud D."/>
            <person name="Mayhew G.F."/>
            <person name="Rose D.J."/>
            <person name="Zhou S."/>
            <person name="Schwartz D.C."/>
            <person name="Perna N.T."/>
            <person name="Mobley H.L.T."/>
            <person name="Donnenberg M.S."/>
            <person name="Blattner F.R."/>
        </authorList>
    </citation>
    <scope>NUCLEOTIDE SEQUENCE [LARGE SCALE GENOMIC DNA]</scope>
    <source>
        <strain>CFT073 / ATCC 700928 / UPEC</strain>
    </source>
</reference>
<protein>
    <recommendedName>
        <fullName evidence="1">Aspartate--tRNA ligase</fullName>
        <ecNumber evidence="1">6.1.1.12</ecNumber>
    </recommendedName>
    <alternativeName>
        <fullName evidence="1">Aspartyl-tRNA synthetase</fullName>
        <shortName evidence="1">AspRS</shortName>
    </alternativeName>
</protein>
<dbReference type="EC" id="6.1.1.12" evidence="1"/>
<dbReference type="EMBL" id="AE014075">
    <property type="protein sequence ID" value="AAN80737.1"/>
    <property type="molecule type" value="Genomic_DNA"/>
</dbReference>
<dbReference type="RefSeq" id="WP_001258675.1">
    <property type="nucleotide sequence ID" value="NZ_CP051263.1"/>
</dbReference>
<dbReference type="SMR" id="Q8FGQ9"/>
<dbReference type="STRING" id="199310.c2280"/>
<dbReference type="KEGG" id="ecc:c2280"/>
<dbReference type="eggNOG" id="COG0173">
    <property type="taxonomic scope" value="Bacteria"/>
</dbReference>
<dbReference type="HOGENOM" id="CLU_014330_3_2_6"/>
<dbReference type="BioCyc" id="ECOL199310:C2280-MONOMER"/>
<dbReference type="Proteomes" id="UP000001410">
    <property type="component" value="Chromosome"/>
</dbReference>
<dbReference type="GO" id="GO:0005737">
    <property type="term" value="C:cytoplasm"/>
    <property type="evidence" value="ECO:0007669"/>
    <property type="project" value="UniProtKB-SubCell"/>
</dbReference>
<dbReference type="GO" id="GO:0004815">
    <property type="term" value="F:aspartate-tRNA ligase activity"/>
    <property type="evidence" value="ECO:0007669"/>
    <property type="project" value="UniProtKB-UniRule"/>
</dbReference>
<dbReference type="GO" id="GO:0005524">
    <property type="term" value="F:ATP binding"/>
    <property type="evidence" value="ECO:0007669"/>
    <property type="project" value="UniProtKB-UniRule"/>
</dbReference>
<dbReference type="GO" id="GO:0003676">
    <property type="term" value="F:nucleic acid binding"/>
    <property type="evidence" value="ECO:0007669"/>
    <property type="project" value="InterPro"/>
</dbReference>
<dbReference type="GO" id="GO:0006422">
    <property type="term" value="P:aspartyl-tRNA aminoacylation"/>
    <property type="evidence" value="ECO:0007669"/>
    <property type="project" value="UniProtKB-UniRule"/>
</dbReference>
<dbReference type="CDD" id="cd00777">
    <property type="entry name" value="AspRS_core"/>
    <property type="match status" value="1"/>
</dbReference>
<dbReference type="CDD" id="cd04317">
    <property type="entry name" value="EcAspRS_like_N"/>
    <property type="match status" value="1"/>
</dbReference>
<dbReference type="FunFam" id="2.40.50.140:FF:000080">
    <property type="entry name" value="Aspartate--tRNA ligase"/>
    <property type="match status" value="1"/>
</dbReference>
<dbReference type="FunFam" id="3.30.1360.30:FF:000001">
    <property type="entry name" value="Aspartate--tRNA ligase"/>
    <property type="match status" value="1"/>
</dbReference>
<dbReference type="Gene3D" id="3.30.930.10">
    <property type="entry name" value="Bira Bifunctional Protein, Domain 2"/>
    <property type="match status" value="1"/>
</dbReference>
<dbReference type="Gene3D" id="3.30.1360.30">
    <property type="entry name" value="GAD-like domain"/>
    <property type="match status" value="1"/>
</dbReference>
<dbReference type="Gene3D" id="2.40.50.140">
    <property type="entry name" value="Nucleic acid-binding proteins"/>
    <property type="match status" value="1"/>
</dbReference>
<dbReference type="HAMAP" id="MF_00044">
    <property type="entry name" value="Asp_tRNA_synth_type1"/>
    <property type="match status" value="1"/>
</dbReference>
<dbReference type="InterPro" id="IPR004364">
    <property type="entry name" value="Aa-tRNA-synt_II"/>
</dbReference>
<dbReference type="InterPro" id="IPR006195">
    <property type="entry name" value="aa-tRNA-synth_II"/>
</dbReference>
<dbReference type="InterPro" id="IPR045864">
    <property type="entry name" value="aa-tRNA-synth_II/BPL/LPL"/>
</dbReference>
<dbReference type="InterPro" id="IPR004524">
    <property type="entry name" value="Asp-tRNA-ligase_1"/>
</dbReference>
<dbReference type="InterPro" id="IPR047089">
    <property type="entry name" value="Asp-tRNA-ligase_1_N"/>
</dbReference>
<dbReference type="InterPro" id="IPR002312">
    <property type="entry name" value="Asp/Asn-tRNA-synth_IIb"/>
</dbReference>
<dbReference type="InterPro" id="IPR047090">
    <property type="entry name" value="AspRS_core"/>
</dbReference>
<dbReference type="InterPro" id="IPR004115">
    <property type="entry name" value="GAD-like_sf"/>
</dbReference>
<dbReference type="InterPro" id="IPR029351">
    <property type="entry name" value="GAD_dom"/>
</dbReference>
<dbReference type="InterPro" id="IPR012340">
    <property type="entry name" value="NA-bd_OB-fold"/>
</dbReference>
<dbReference type="InterPro" id="IPR004365">
    <property type="entry name" value="NA-bd_OB_tRNA"/>
</dbReference>
<dbReference type="NCBIfam" id="TIGR00459">
    <property type="entry name" value="aspS_bact"/>
    <property type="match status" value="1"/>
</dbReference>
<dbReference type="NCBIfam" id="NF001750">
    <property type="entry name" value="PRK00476.1"/>
    <property type="match status" value="1"/>
</dbReference>
<dbReference type="PANTHER" id="PTHR22594:SF5">
    <property type="entry name" value="ASPARTATE--TRNA LIGASE, MITOCHONDRIAL"/>
    <property type="match status" value="1"/>
</dbReference>
<dbReference type="PANTHER" id="PTHR22594">
    <property type="entry name" value="ASPARTYL/LYSYL-TRNA SYNTHETASE"/>
    <property type="match status" value="1"/>
</dbReference>
<dbReference type="Pfam" id="PF02938">
    <property type="entry name" value="GAD"/>
    <property type="match status" value="1"/>
</dbReference>
<dbReference type="Pfam" id="PF00152">
    <property type="entry name" value="tRNA-synt_2"/>
    <property type="match status" value="1"/>
</dbReference>
<dbReference type="Pfam" id="PF01336">
    <property type="entry name" value="tRNA_anti-codon"/>
    <property type="match status" value="1"/>
</dbReference>
<dbReference type="PRINTS" id="PR01042">
    <property type="entry name" value="TRNASYNTHASP"/>
</dbReference>
<dbReference type="SUPFAM" id="SSF55681">
    <property type="entry name" value="Class II aaRS and biotin synthetases"/>
    <property type="match status" value="1"/>
</dbReference>
<dbReference type="SUPFAM" id="SSF55261">
    <property type="entry name" value="GAD domain-like"/>
    <property type="match status" value="1"/>
</dbReference>
<dbReference type="SUPFAM" id="SSF50249">
    <property type="entry name" value="Nucleic acid-binding proteins"/>
    <property type="match status" value="1"/>
</dbReference>
<dbReference type="PROSITE" id="PS50862">
    <property type="entry name" value="AA_TRNA_LIGASE_II"/>
    <property type="match status" value="1"/>
</dbReference>
<feature type="chain" id="PRO_0000110869" description="Aspartate--tRNA ligase">
    <location>
        <begin position="1"/>
        <end position="590"/>
    </location>
</feature>
<feature type="region of interest" description="Aspartate" evidence="1">
    <location>
        <begin position="195"/>
        <end position="198"/>
    </location>
</feature>
<feature type="binding site" evidence="1">
    <location>
        <position position="171"/>
    </location>
    <ligand>
        <name>L-aspartate</name>
        <dbReference type="ChEBI" id="CHEBI:29991"/>
    </ligand>
</feature>
<feature type="binding site" evidence="1">
    <location>
        <begin position="217"/>
        <end position="219"/>
    </location>
    <ligand>
        <name>ATP</name>
        <dbReference type="ChEBI" id="CHEBI:30616"/>
    </ligand>
</feature>
<feature type="binding site" evidence="1">
    <location>
        <position position="217"/>
    </location>
    <ligand>
        <name>L-aspartate</name>
        <dbReference type="ChEBI" id="CHEBI:29991"/>
    </ligand>
</feature>
<feature type="binding site" evidence="1">
    <location>
        <position position="226"/>
    </location>
    <ligand>
        <name>ATP</name>
        <dbReference type="ChEBI" id="CHEBI:30616"/>
    </ligand>
</feature>
<feature type="binding site" evidence="1">
    <location>
        <position position="448"/>
    </location>
    <ligand>
        <name>L-aspartate</name>
        <dbReference type="ChEBI" id="CHEBI:29991"/>
    </ligand>
</feature>
<feature type="binding site" evidence="1">
    <location>
        <position position="482"/>
    </location>
    <ligand>
        <name>ATP</name>
        <dbReference type="ChEBI" id="CHEBI:30616"/>
    </ligand>
</feature>
<feature type="binding site" evidence="1">
    <location>
        <position position="489"/>
    </location>
    <ligand>
        <name>L-aspartate</name>
        <dbReference type="ChEBI" id="CHEBI:29991"/>
    </ligand>
</feature>
<feature type="binding site" evidence="1">
    <location>
        <begin position="534"/>
        <end position="537"/>
    </location>
    <ligand>
        <name>ATP</name>
        <dbReference type="ChEBI" id="CHEBI:30616"/>
    </ligand>
</feature>
<organism>
    <name type="scientific">Escherichia coli O6:H1 (strain CFT073 / ATCC 700928 / UPEC)</name>
    <dbReference type="NCBI Taxonomy" id="199310"/>
    <lineage>
        <taxon>Bacteria</taxon>
        <taxon>Pseudomonadati</taxon>
        <taxon>Pseudomonadota</taxon>
        <taxon>Gammaproteobacteria</taxon>
        <taxon>Enterobacterales</taxon>
        <taxon>Enterobacteriaceae</taxon>
        <taxon>Escherichia</taxon>
    </lineage>
</organism>